<proteinExistence type="inferred from homology"/>
<name>ARGB_PSEFS</name>
<protein>
    <recommendedName>
        <fullName evidence="1">Acetylglutamate kinase</fullName>
        <ecNumber evidence="1">2.7.2.8</ecNumber>
    </recommendedName>
    <alternativeName>
        <fullName evidence="1">N-acetyl-L-glutamate 5-phosphotransferase</fullName>
    </alternativeName>
    <alternativeName>
        <fullName evidence="1">NAG kinase</fullName>
        <shortName evidence="1">NAGK</shortName>
    </alternativeName>
</protein>
<accession>C3K475</accession>
<evidence type="ECO:0000255" key="1">
    <source>
        <dbReference type="HAMAP-Rule" id="MF_00082"/>
    </source>
</evidence>
<sequence length="301" mass="31946">MTLEREAAANTAKVLSEALPYIRRYVGKTLVIKYGGNAMESDELKTGFARDIVLMKAVGINPVVVHGGGPQIGDLLKRLSIESHFIDGMRVTDAQTMDVVEMVLGGQVNKDIVNLINRHGGSAIGLTGKDAELIRAKKLTVTRQTPEMTQPEIIDIGQVGEVIGINTDLLNLLVKGDFIPVIAPIGVGANGESYNINADLVAGKVAEALKAEKLMLLTNIAGLMDKEGKVLTGLTTQQVDELIADGTIYGGMLPKIRCALEAVQGGVGSSLILDGRVPNAILLEIFTDTGVGTLISNRKRP</sequence>
<organism>
    <name type="scientific">Pseudomonas fluorescens (strain SBW25)</name>
    <dbReference type="NCBI Taxonomy" id="216595"/>
    <lineage>
        <taxon>Bacteria</taxon>
        <taxon>Pseudomonadati</taxon>
        <taxon>Pseudomonadota</taxon>
        <taxon>Gammaproteobacteria</taxon>
        <taxon>Pseudomonadales</taxon>
        <taxon>Pseudomonadaceae</taxon>
        <taxon>Pseudomonas</taxon>
    </lineage>
</organism>
<dbReference type="EC" id="2.7.2.8" evidence="1"/>
<dbReference type="EMBL" id="AM181176">
    <property type="protein sequence ID" value="CAY53512.1"/>
    <property type="molecule type" value="Genomic_DNA"/>
</dbReference>
<dbReference type="RefSeq" id="WP_015886532.1">
    <property type="nucleotide sequence ID" value="NC_012660.1"/>
</dbReference>
<dbReference type="SMR" id="C3K475"/>
<dbReference type="STRING" id="294.SRM1_05682"/>
<dbReference type="GeneID" id="93467615"/>
<dbReference type="eggNOG" id="COG0548">
    <property type="taxonomic scope" value="Bacteria"/>
</dbReference>
<dbReference type="HOGENOM" id="CLU_053680_0_0_6"/>
<dbReference type="OrthoDB" id="9803155at2"/>
<dbReference type="UniPathway" id="UPA00068">
    <property type="reaction ID" value="UER00107"/>
</dbReference>
<dbReference type="GO" id="GO:0005737">
    <property type="term" value="C:cytoplasm"/>
    <property type="evidence" value="ECO:0007669"/>
    <property type="project" value="UniProtKB-SubCell"/>
</dbReference>
<dbReference type="GO" id="GO:0003991">
    <property type="term" value="F:acetylglutamate kinase activity"/>
    <property type="evidence" value="ECO:0007669"/>
    <property type="project" value="UniProtKB-UniRule"/>
</dbReference>
<dbReference type="GO" id="GO:0005524">
    <property type="term" value="F:ATP binding"/>
    <property type="evidence" value="ECO:0007669"/>
    <property type="project" value="UniProtKB-UniRule"/>
</dbReference>
<dbReference type="GO" id="GO:0042450">
    <property type="term" value="P:arginine biosynthetic process via ornithine"/>
    <property type="evidence" value="ECO:0007669"/>
    <property type="project" value="UniProtKB-UniRule"/>
</dbReference>
<dbReference type="GO" id="GO:0006526">
    <property type="term" value="P:L-arginine biosynthetic process"/>
    <property type="evidence" value="ECO:0007669"/>
    <property type="project" value="UniProtKB-UniPathway"/>
</dbReference>
<dbReference type="CDD" id="cd04250">
    <property type="entry name" value="AAK_NAGK-C"/>
    <property type="match status" value="1"/>
</dbReference>
<dbReference type="FunFam" id="3.40.1160.10:FF:000004">
    <property type="entry name" value="Acetylglutamate kinase"/>
    <property type="match status" value="1"/>
</dbReference>
<dbReference type="Gene3D" id="3.40.1160.10">
    <property type="entry name" value="Acetylglutamate kinase-like"/>
    <property type="match status" value="1"/>
</dbReference>
<dbReference type="HAMAP" id="MF_00082">
    <property type="entry name" value="ArgB"/>
    <property type="match status" value="1"/>
</dbReference>
<dbReference type="InterPro" id="IPR036393">
    <property type="entry name" value="AceGlu_kinase-like_sf"/>
</dbReference>
<dbReference type="InterPro" id="IPR004662">
    <property type="entry name" value="AcgluKinase_fam"/>
</dbReference>
<dbReference type="InterPro" id="IPR037528">
    <property type="entry name" value="ArgB"/>
</dbReference>
<dbReference type="InterPro" id="IPR001048">
    <property type="entry name" value="Asp/Glu/Uridylate_kinase"/>
</dbReference>
<dbReference type="InterPro" id="IPR001057">
    <property type="entry name" value="Glu/AcGlu_kinase"/>
</dbReference>
<dbReference type="InterPro" id="IPR041727">
    <property type="entry name" value="NAGK-C"/>
</dbReference>
<dbReference type="NCBIfam" id="TIGR00761">
    <property type="entry name" value="argB"/>
    <property type="match status" value="1"/>
</dbReference>
<dbReference type="PANTHER" id="PTHR23342">
    <property type="entry name" value="N-ACETYLGLUTAMATE SYNTHASE"/>
    <property type="match status" value="1"/>
</dbReference>
<dbReference type="PANTHER" id="PTHR23342:SF0">
    <property type="entry name" value="N-ACETYLGLUTAMATE SYNTHASE, MITOCHONDRIAL"/>
    <property type="match status" value="1"/>
</dbReference>
<dbReference type="Pfam" id="PF00696">
    <property type="entry name" value="AA_kinase"/>
    <property type="match status" value="1"/>
</dbReference>
<dbReference type="PIRSF" id="PIRSF000728">
    <property type="entry name" value="NAGK"/>
    <property type="match status" value="1"/>
</dbReference>
<dbReference type="PRINTS" id="PR00474">
    <property type="entry name" value="GLU5KINASE"/>
</dbReference>
<dbReference type="SUPFAM" id="SSF53633">
    <property type="entry name" value="Carbamate kinase-like"/>
    <property type="match status" value="1"/>
</dbReference>
<reference key="1">
    <citation type="journal article" date="2009" name="Genome Biol.">
        <title>Genomic and genetic analyses of diversity and plant interactions of Pseudomonas fluorescens.</title>
        <authorList>
            <person name="Silby M.W."/>
            <person name="Cerdeno-Tarraga A.M."/>
            <person name="Vernikos G.S."/>
            <person name="Giddens S.R."/>
            <person name="Jackson R.W."/>
            <person name="Preston G.M."/>
            <person name="Zhang X.-X."/>
            <person name="Moon C.D."/>
            <person name="Gehrig S.M."/>
            <person name="Godfrey S.A.C."/>
            <person name="Knight C.G."/>
            <person name="Malone J.G."/>
            <person name="Robinson Z."/>
            <person name="Spiers A.J."/>
            <person name="Harris S."/>
            <person name="Challis G.L."/>
            <person name="Yaxley A.M."/>
            <person name="Harris D."/>
            <person name="Seeger K."/>
            <person name="Murphy L."/>
            <person name="Rutter S."/>
            <person name="Squares R."/>
            <person name="Quail M.A."/>
            <person name="Saunders E."/>
            <person name="Mavromatis K."/>
            <person name="Brettin T.S."/>
            <person name="Bentley S.D."/>
            <person name="Hothersall J."/>
            <person name="Stephens E."/>
            <person name="Thomas C.M."/>
            <person name="Parkhill J."/>
            <person name="Levy S.B."/>
            <person name="Rainey P.B."/>
            <person name="Thomson N.R."/>
        </authorList>
    </citation>
    <scope>NUCLEOTIDE SEQUENCE [LARGE SCALE GENOMIC DNA]</scope>
    <source>
        <strain>SBW25</strain>
    </source>
</reference>
<gene>
    <name evidence="1" type="primary">argB</name>
    <name type="ordered locus">PFLU_5987</name>
</gene>
<keyword id="KW-0028">Amino-acid biosynthesis</keyword>
<keyword id="KW-0055">Arginine biosynthesis</keyword>
<keyword id="KW-0067">ATP-binding</keyword>
<keyword id="KW-0963">Cytoplasm</keyword>
<keyword id="KW-0418">Kinase</keyword>
<keyword id="KW-0547">Nucleotide-binding</keyword>
<keyword id="KW-0808">Transferase</keyword>
<comment type="function">
    <text evidence="1">Catalyzes the ATP-dependent phosphorylation of N-acetyl-L-glutamate.</text>
</comment>
<comment type="catalytic activity">
    <reaction evidence="1">
        <text>N-acetyl-L-glutamate + ATP = N-acetyl-L-glutamyl 5-phosphate + ADP</text>
        <dbReference type="Rhea" id="RHEA:14629"/>
        <dbReference type="ChEBI" id="CHEBI:30616"/>
        <dbReference type="ChEBI" id="CHEBI:44337"/>
        <dbReference type="ChEBI" id="CHEBI:57936"/>
        <dbReference type="ChEBI" id="CHEBI:456216"/>
        <dbReference type="EC" id="2.7.2.8"/>
    </reaction>
</comment>
<comment type="pathway">
    <text evidence="1">Amino-acid biosynthesis; L-arginine biosynthesis; N(2)-acetyl-L-ornithine from L-glutamate: step 2/4.</text>
</comment>
<comment type="subcellular location">
    <subcellularLocation>
        <location evidence="1">Cytoplasm</location>
    </subcellularLocation>
</comment>
<comment type="similarity">
    <text evidence="1">Belongs to the acetylglutamate kinase family. ArgB subfamily.</text>
</comment>
<feature type="chain" id="PRO_1000202567" description="Acetylglutamate kinase">
    <location>
        <begin position="1"/>
        <end position="301"/>
    </location>
</feature>
<feature type="binding site" evidence="1">
    <location>
        <begin position="68"/>
        <end position="69"/>
    </location>
    <ligand>
        <name>substrate</name>
    </ligand>
</feature>
<feature type="binding site" evidence="1">
    <location>
        <position position="90"/>
    </location>
    <ligand>
        <name>substrate</name>
    </ligand>
</feature>
<feature type="binding site" evidence="1">
    <location>
        <position position="195"/>
    </location>
    <ligand>
        <name>substrate</name>
    </ligand>
</feature>
<feature type="site" description="Transition state stabilizer" evidence="1">
    <location>
        <position position="33"/>
    </location>
</feature>
<feature type="site" description="Transition state stabilizer" evidence="1">
    <location>
        <position position="255"/>
    </location>
</feature>